<organism>
    <name type="scientific">Rhodopseudomonas palustris (strain BisB5)</name>
    <dbReference type="NCBI Taxonomy" id="316057"/>
    <lineage>
        <taxon>Bacteria</taxon>
        <taxon>Pseudomonadati</taxon>
        <taxon>Pseudomonadota</taxon>
        <taxon>Alphaproteobacteria</taxon>
        <taxon>Hyphomicrobiales</taxon>
        <taxon>Nitrobacteraceae</taxon>
        <taxon>Rhodopseudomonas</taxon>
    </lineage>
</organism>
<feature type="chain" id="PRO_1000050569" description="Ketol-acid reductoisomerase (NADP(+))">
    <location>
        <begin position="1"/>
        <end position="339"/>
    </location>
</feature>
<feature type="domain" description="KARI N-terminal Rossmann" evidence="2">
    <location>
        <begin position="1"/>
        <end position="182"/>
    </location>
</feature>
<feature type="domain" description="KARI C-terminal knotted" evidence="3">
    <location>
        <begin position="183"/>
        <end position="328"/>
    </location>
</feature>
<feature type="active site" evidence="1">
    <location>
        <position position="108"/>
    </location>
</feature>
<feature type="binding site" evidence="1">
    <location>
        <begin position="24"/>
        <end position="27"/>
    </location>
    <ligand>
        <name>NADP(+)</name>
        <dbReference type="ChEBI" id="CHEBI:58349"/>
    </ligand>
</feature>
<feature type="binding site" evidence="1">
    <location>
        <position position="48"/>
    </location>
    <ligand>
        <name>NADP(+)</name>
        <dbReference type="ChEBI" id="CHEBI:58349"/>
    </ligand>
</feature>
<feature type="binding site" evidence="1">
    <location>
        <position position="51"/>
    </location>
    <ligand>
        <name>NADP(+)</name>
        <dbReference type="ChEBI" id="CHEBI:58349"/>
    </ligand>
</feature>
<feature type="binding site" evidence="1">
    <location>
        <position position="53"/>
    </location>
    <ligand>
        <name>NADP(+)</name>
        <dbReference type="ChEBI" id="CHEBI:58349"/>
    </ligand>
</feature>
<feature type="binding site" evidence="1">
    <location>
        <begin position="83"/>
        <end position="86"/>
    </location>
    <ligand>
        <name>NADP(+)</name>
        <dbReference type="ChEBI" id="CHEBI:58349"/>
    </ligand>
</feature>
<feature type="binding site" evidence="1">
    <location>
        <position position="134"/>
    </location>
    <ligand>
        <name>NADP(+)</name>
        <dbReference type="ChEBI" id="CHEBI:58349"/>
    </ligand>
</feature>
<feature type="binding site" evidence="1">
    <location>
        <position position="191"/>
    </location>
    <ligand>
        <name>Mg(2+)</name>
        <dbReference type="ChEBI" id="CHEBI:18420"/>
        <label>1</label>
    </ligand>
</feature>
<feature type="binding site" evidence="1">
    <location>
        <position position="191"/>
    </location>
    <ligand>
        <name>Mg(2+)</name>
        <dbReference type="ChEBI" id="CHEBI:18420"/>
        <label>2</label>
    </ligand>
</feature>
<feature type="binding site" evidence="1">
    <location>
        <position position="195"/>
    </location>
    <ligand>
        <name>Mg(2+)</name>
        <dbReference type="ChEBI" id="CHEBI:18420"/>
        <label>1</label>
    </ligand>
</feature>
<feature type="binding site" evidence="1">
    <location>
        <position position="227"/>
    </location>
    <ligand>
        <name>Mg(2+)</name>
        <dbReference type="ChEBI" id="CHEBI:18420"/>
        <label>2</label>
    </ligand>
</feature>
<feature type="binding site" evidence="1">
    <location>
        <position position="231"/>
    </location>
    <ligand>
        <name>Mg(2+)</name>
        <dbReference type="ChEBI" id="CHEBI:18420"/>
        <label>2</label>
    </ligand>
</feature>
<feature type="binding site" evidence="1">
    <location>
        <position position="252"/>
    </location>
    <ligand>
        <name>substrate</name>
    </ligand>
</feature>
<protein>
    <recommendedName>
        <fullName evidence="1">Ketol-acid reductoisomerase (NADP(+))</fullName>
        <shortName evidence="1">KARI</shortName>
        <ecNumber evidence="1">1.1.1.86</ecNumber>
    </recommendedName>
    <alternativeName>
        <fullName evidence="1">Acetohydroxy-acid isomeroreductase</fullName>
        <shortName evidence="1">AHIR</shortName>
    </alternativeName>
    <alternativeName>
        <fullName evidence="1">Alpha-keto-beta-hydroxylacyl reductoisomerase</fullName>
    </alternativeName>
    <alternativeName>
        <fullName evidence="1">Ketol-acid reductoisomerase type 1</fullName>
    </alternativeName>
    <alternativeName>
        <fullName evidence="1">Ketol-acid reductoisomerase type I</fullName>
    </alternativeName>
</protein>
<keyword id="KW-0028">Amino-acid biosynthesis</keyword>
<keyword id="KW-0100">Branched-chain amino acid biosynthesis</keyword>
<keyword id="KW-0460">Magnesium</keyword>
<keyword id="KW-0479">Metal-binding</keyword>
<keyword id="KW-0521">NADP</keyword>
<keyword id="KW-0560">Oxidoreductase</keyword>
<reference key="1">
    <citation type="submission" date="2006-03" db="EMBL/GenBank/DDBJ databases">
        <title>Complete sequence of Rhodopseudomonas palustris BisB5.</title>
        <authorList>
            <consortium name="US DOE Joint Genome Institute"/>
            <person name="Copeland A."/>
            <person name="Lucas S."/>
            <person name="Lapidus A."/>
            <person name="Barry K."/>
            <person name="Detter J.C."/>
            <person name="Glavina del Rio T."/>
            <person name="Hammon N."/>
            <person name="Israni S."/>
            <person name="Dalin E."/>
            <person name="Tice H."/>
            <person name="Pitluck S."/>
            <person name="Chain P."/>
            <person name="Malfatti S."/>
            <person name="Shin M."/>
            <person name="Vergez L."/>
            <person name="Schmutz J."/>
            <person name="Larimer F."/>
            <person name="Land M."/>
            <person name="Hauser L."/>
            <person name="Pelletier D.A."/>
            <person name="Kyrpides N."/>
            <person name="Lykidis A."/>
            <person name="Oda Y."/>
            <person name="Harwood C.S."/>
            <person name="Richardson P."/>
        </authorList>
    </citation>
    <scope>NUCLEOTIDE SEQUENCE [LARGE SCALE GENOMIC DNA]</scope>
    <source>
        <strain>BisB5</strain>
    </source>
</reference>
<evidence type="ECO:0000255" key="1">
    <source>
        <dbReference type="HAMAP-Rule" id="MF_00435"/>
    </source>
</evidence>
<evidence type="ECO:0000255" key="2">
    <source>
        <dbReference type="PROSITE-ProRule" id="PRU01197"/>
    </source>
</evidence>
<evidence type="ECO:0000255" key="3">
    <source>
        <dbReference type="PROSITE-ProRule" id="PRU01198"/>
    </source>
</evidence>
<accession>Q139A2</accession>
<proteinExistence type="inferred from homology"/>
<dbReference type="EC" id="1.1.1.86" evidence="1"/>
<dbReference type="EMBL" id="CP000283">
    <property type="protein sequence ID" value="ABE39337.1"/>
    <property type="molecule type" value="Genomic_DNA"/>
</dbReference>
<dbReference type="SMR" id="Q139A2"/>
<dbReference type="STRING" id="316057.RPD_2102"/>
<dbReference type="KEGG" id="rpd:RPD_2102"/>
<dbReference type="eggNOG" id="COG0059">
    <property type="taxonomic scope" value="Bacteria"/>
</dbReference>
<dbReference type="HOGENOM" id="CLU_033821_0_1_5"/>
<dbReference type="BioCyc" id="RPAL316057:RPD_RS10550-MONOMER"/>
<dbReference type="UniPathway" id="UPA00047">
    <property type="reaction ID" value="UER00056"/>
</dbReference>
<dbReference type="UniPathway" id="UPA00049">
    <property type="reaction ID" value="UER00060"/>
</dbReference>
<dbReference type="Proteomes" id="UP000001818">
    <property type="component" value="Chromosome"/>
</dbReference>
<dbReference type="GO" id="GO:0005829">
    <property type="term" value="C:cytosol"/>
    <property type="evidence" value="ECO:0007669"/>
    <property type="project" value="TreeGrafter"/>
</dbReference>
<dbReference type="GO" id="GO:0004455">
    <property type="term" value="F:ketol-acid reductoisomerase activity"/>
    <property type="evidence" value="ECO:0007669"/>
    <property type="project" value="UniProtKB-UniRule"/>
</dbReference>
<dbReference type="GO" id="GO:0000287">
    <property type="term" value="F:magnesium ion binding"/>
    <property type="evidence" value="ECO:0007669"/>
    <property type="project" value="UniProtKB-UniRule"/>
</dbReference>
<dbReference type="GO" id="GO:0050661">
    <property type="term" value="F:NADP binding"/>
    <property type="evidence" value="ECO:0007669"/>
    <property type="project" value="InterPro"/>
</dbReference>
<dbReference type="GO" id="GO:0009097">
    <property type="term" value="P:isoleucine biosynthetic process"/>
    <property type="evidence" value="ECO:0007669"/>
    <property type="project" value="UniProtKB-UniRule"/>
</dbReference>
<dbReference type="GO" id="GO:0009099">
    <property type="term" value="P:L-valine biosynthetic process"/>
    <property type="evidence" value="ECO:0007669"/>
    <property type="project" value="UniProtKB-UniRule"/>
</dbReference>
<dbReference type="FunFam" id="3.40.50.720:FF:000023">
    <property type="entry name" value="Ketol-acid reductoisomerase (NADP(+))"/>
    <property type="match status" value="1"/>
</dbReference>
<dbReference type="Gene3D" id="6.10.240.10">
    <property type="match status" value="1"/>
</dbReference>
<dbReference type="Gene3D" id="3.40.50.720">
    <property type="entry name" value="NAD(P)-binding Rossmann-like Domain"/>
    <property type="match status" value="1"/>
</dbReference>
<dbReference type="HAMAP" id="MF_00435">
    <property type="entry name" value="IlvC"/>
    <property type="match status" value="1"/>
</dbReference>
<dbReference type="InterPro" id="IPR008927">
    <property type="entry name" value="6-PGluconate_DH-like_C_sf"/>
</dbReference>
<dbReference type="InterPro" id="IPR013023">
    <property type="entry name" value="KARI"/>
</dbReference>
<dbReference type="InterPro" id="IPR000506">
    <property type="entry name" value="KARI_C"/>
</dbReference>
<dbReference type="InterPro" id="IPR013116">
    <property type="entry name" value="KARI_N"/>
</dbReference>
<dbReference type="InterPro" id="IPR014359">
    <property type="entry name" value="KARI_prok"/>
</dbReference>
<dbReference type="InterPro" id="IPR036291">
    <property type="entry name" value="NAD(P)-bd_dom_sf"/>
</dbReference>
<dbReference type="NCBIfam" id="TIGR00465">
    <property type="entry name" value="ilvC"/>
    <property type="match status" value="1"/>
</dbReference>
<dbReference type="NCBIfam" id="NF004017">
    <property type="entry name" value="PRK05479.1"/>
    <property type="match status" value="1"/>
</dbReference>
<dbReference type="NCBIfam" id="NF009940">
    <property type="entry name" value="PRK13403.1"/>
    <property type="match status" value="1"/>
</dbReference>
<dbReference type="PANTHER" id="PTHR21371">
    <property type="entry name" value="KETOL-ACID REDUCTOISOMERASE, MITOCHONDRIAL"/>
    <property type="match status" value="1"/>
</dbReference>
<dbReference type="PANTHER" id="PTHR21371:SF1">
    <property type="entry name" value="KETOL-ACID REDUCTOISOMERASE, MITOCHONDRIAL"/>
    <property type="match status" value="1"/>
</dbReference>
<dbReference type="Pfam" id="PF01450">
    <property type="entry name" value="KARI_C"/>
    <property type="match status" value="1"/>
</dbReference>
<dbReference type="Pfam" id="PF07991">
    <property type="entry name" value="KARI_N"/>
    <property type="match status" value="1"/>
</dbReference>
<dbReference type="PIRSF" id="PIRSF000116">
    <property type="entry name" value="IlvC_gammaproteo"/>
    <property type="match status" value="1"/>
</dbReference>
<dbReference type="SUPFAM" id="SSF48179">
    <property type="entry name" value="6-phosphogluconate dehydrogenase C-terminal domain-like"/>
    <property type="match status" value="1"/>
</dbReference>
<dbReference type="SUPFAM" id="SSF51735">
    <property type="entry name" value="NAD(P)-binding Rossmann-fold domains"/>
    <property type="match status" value="1"/>
</dbReference>
<dbReference type="PROSITE" id="PS51851">
    <property type="entry name" value="KARI_C"/>
    <property type="match status" value="1"/>
</dbReference>
<dbReference type="PROSITE" id="PS51850">
    <property type="entry name" value="KARI_N"/>
    <property type="match status" value="1"/>
</dbReference>
<gene>
    <name evidence="1" type="primary">ilvC</name>
    <name type="ordered locus">RPD_2102</name>
</gene>
<name>ILVC_RHOPS</name>
<sequence>MRVYYDRDADLNLIKGKKVVIVGYGSQGHAHALNLKDSGVKDVAIALRKGSATAKKAEAAGFKVMEVAEAAKWADVMMMLTPDELQGEIYREHLHDNMKQGAALLFAHGLNVHFNLIEPRADLDVLMVAPKGPGHTVRSEYQRGGGVPSLIAIHKDSSGNAHDLGLSYASAIGGGRAGIIETSFKEECETDLFGEQVVLCGGLVELIKAGFETLVEAGYAPEMAYFECLHEVKLIVDLIYEGGIANMNYSISNTAEYGEYVTGPRIVTAETKAEMKRVLADIQNGIFTRNWMLENKVNQTSFKATRAKLAQHPIEEVGAKLREMMPWIKKGALVDKTKN</sequence>
<comment type="function">
    <text evidence="1">Involved in the biosynthesis of branched-chain amino acids (BCAA). Catalyzes an alkyl-migration followed by a ketol-acid reduction of (S)-2-acetolactate (S2AL) to yield (R)-2,3-dihydroxy-isovalerate. In the isomerase reaction, S2AL is rearranged via a Mg-dependent methyl migration to produce 3-hydroxy-3-methyl-2-ketobutyrate (HMKB). In the reductase reaction, this 2-ketoacid undergoes a metal-dependent reduction by NADPH to yield (R)-2,3-dihydroxy-isovalerate.</text>
</comment>
<comment type="catalytic activity">
    <reaction evidence="1">
        <text>(2R)-2,3-dihydroxy-3-methylbutanoate + NADP(+) = (2S)-2-acetolactate + NADPH + H(+)</text>
        <dbReference type="Rhea" id="RHEA:22068"/>
        <dbReference type="ChEBI" id="CHEBI:15378"/>
        <dbReference type="ChEBI" id="CHEBI:49072"/>
        <dbReference type="ChEBI" id="CHEBI:57783"/>
        <dbReference type="ChEBI" id="CHEBI:58349"/>
        <dbReference type="ChEBI" id="CHEBI:58476"/>
        <dbReference type="EC" id="1.1.1.86"/>
    </reaction>
</comment>
<comment type="catalytic activity">
    <reaction evidence="1">
        <text>(2R,3R)-2,3-dihydroxy-3-methylpentanoate + NADP(+) = (S)-2-ethyl-2-hydroxy-3-oxobutanoate + NADPH + H(+)</text>
        <dbReference type="Rhea" id="RHEA:13493"/>
        <dbReference type="ChEBI" id="CHEBI:15378"/>
        <dbReference type="ChEBI" id="CHEBI:49256"/>
        <dbReference type="ChEBI" id="CHEBI:49258"/>
        <dbReference type="ChEBI" id="CHEBI:57783"/>
        <dbReference type="ChEBI" id="CHEBI:58349"/>
        <dbReference type="EC" id="1.1.1.86"/>
    </reaction>
</comment>
<comment type="cofactor">
    <cofactor evidence="1">
        <name>Mg(2+)</name>
        <dbReference type="ChEBI" id="CHEBI:18420"/>
    </cofactor>
    <text evidence="1">Binds 2 magnesium ions per subunit.</text>
</comment>
<comment type="pathway">
    <text evidence="1">Amino-acid biosynthesis; L-isoleucine biosynthesis; L-isoleucine from 2-oxobutanoate: step 2/4.</text>
</comment>
<comment type="pathway">
    <text evidence="1">Amino-acid biosynthesis; L-valine biosynthesis; L-valine from pyruvate: step 2/4.</text>
</comment>
<comment type="similarity">
    <text evidence="1">Belongs to the ketol-acid reductoisomerase family.</text>
</comment>